<gene>
    <name evidence="1" type="primary">tyrS</name>
    <name type="ordered locus">MGAS10270_Spy0083</name>
</gene>
<accession>Q1JJ25</accession>
<protein>
    <recommendedName>
        <fullName evidence="1">Tyrosine--tRNA ligase</fullName>
        <ecNumber evidence="1">6.1.1.1</ecNumber>
    </recommendedName>
    <alternativeName>
        <fullName evidence="1">Tyrosyl-tRNA synthetase</fullName>
        <shortName evidence="1">TyrRS</shortName>
    </alternativeName>
</protein>
<feature type="chain" id="PRO_1000088636" description="Tyrosine--tRNA ligase">
    <location>
        <begin position="1"/>
        <end position="418"/>
    </location>
</feature>
<feature type="domain" description="S4 RNA-binding" evidence="1">
    <location>
        <begin position="352"/>
        <end position="418"/>
    </location>
</feature>
<feature type="short sequence motif" description="'HIGH' region">
    <location>
        <begin position="39"/>
        <end position="48"/>
    </location>
</feature>
<feature type="short sequence motif" description="'KMSKS' region">
    <location>
        <begin position="229"/>
        <end position="233"/>
    </location>
</feature>
<feature type="binding site" evidence="1">
    <location>
        <position position="34"/>
    </location>
    <ligand>
        <name>L-tyrosine</name>
        <dbReference type="ChEBI" id="CHEBI:58315"/>
    </ligand>
</feature>
<feature type="binding site" evidence="1">
    <location>
        <position position="169"/>
    </location>
    <ligand>
        <name>L-tyrosine</name>
        <dbReference type="ChEBI" id="CHEBI:58315"/>
    </ligand>
</feature>
<feature type="binding site" evidence="1">
    <location>
        <position position="173"/>
    </location>
    <ligand>
        <name>L-tyrosine</name>
        <dbReference type="ChEBI" id="CHEBI:58315"/>
    </ligand>
</feature>
<feature type="binding site" evidence="1">
    <location>
        <position position="232"/>
    </location>
    <ligand>
        <name>ATP</name>
        <dbReference type="ChEBI" id="CHEBI:30616"/>
    </ligand>
</feature>
<dbReference type="EC" id="6.1.1.1" evidence="1"/>
<dbReference type="EMBL" id="CP000260">
    <property type="protein sequence ID" value="ABF33148.1"/>
    <property type="molecule type" value="Genomic_DNA"/>
</dbReference>
<dbReference type="SMR" id="Q1JJ25"/>
<dbReference type="KEGG" id="sph:MGAS10270_Spy0083"/>
<dbReference type="HOGENOM" id="CLU_024003_0_3_9"/>
<dbReference type="Proteomes" id="UP000002436">
    <property type="component" value="Chromosome"/>
</dbReference>
<dbReference type="GO" id="GO:0005829">
    <property type="term" value="C:cytosol"/>
    <property type="evidence" value="ECO:0007669"/>
    <property type="project" value="TreeGrafter"/>
</dbReference>
<dbReference type="GO" id="GO:0005524">
    <property type="term" value="F:ATP binding"/>
    <property type="evidence" value="ECO:0007669"/>
    <property type="project" value="UniProtKB-UniRule"/>
</dbReference>
<dbReference type="GO" id="GO:0003723">
    <property type="term" value="F:RNA binding"/>
    <property type="evidence" value="ECO:0007669"/>
    <property type="project" value="UniProtKB-KW"/>
</dbReference>
<dbReference type="GO" id="GO:0004831">
    <property type="term" value="F:tyrosine-tRNA ligase activity"/>
    <property type="evidence" value="ECO:0007669"/>
    <property type="project" value="UniProtKB-UniRule"/>
</dbReference>
<dbReference type="GO" id="GO:0006437">
    <property type="term" value="P:tyrosyl-tRNA aminoacylation"/>
    <property type="evidence" value="ECO:0007669"/>
    <property type="project" value="UniProtKB-UniRule"/>
</dbReference>
<dbReference type="CDD" id="cd00165">
    <property type="entry name" value="S4"/>
    <property type="match status" value="1"/>
</dbReference>
<dbReference type="CDD" id="cd00805">
    <property type="entry name" value="TyrRS_core"/>
    <property type="match status" value="1"/>
</dbReference>
<dbReference type="FunFam" id="1.10.240.10:FF:000001">
    <property type="entry name" value="Tyrosine--tRNA ligase"/>
    <property type="match status" value="1"/>
</dbReference>
<dbReference type="FunFam" id="3.40.50.620:FF:000008">
    <property type="entry name" value="Tyrosine--tRNA ligase"/>
    <property type="match status" value="1"/>
</dbReference>
<dbReference type="Gene3D" id="3.40.50.620">
    <property type="entry name" value="HUPs"/>
    <property type="match status" value="1"/>
</dbReference>
<dbReference type="Gene3D" id="3.10.290.10">
    <property type="entry name" value="RNA-binding S4 domain"/>
    <property type="match status" value="1"/>
</dbReference>
<dbReference type="Gene3D" id="1.10.240.10">
    <property type="entry name" value="Tyrosyl-Transfer RNA Synthetase"/>
    <property type="match status" value="1"/>
</dbReference>
<dbReference type="HAMAP" id="MF_02006">
    <property type="entry name" value="Tyr_tRNA_synth_type1"/>
    <property type="match status" value="1"/>
</dbReference>
<dbReference type="InterPro" id="IPR001412">
    <property type="entry name" value="aa-tRNA-synth_I_CS"/>
</dbReference>
<dbReference type="InterPro" id="IPR002305">
    <property type="entry name" value="aa-tRNA-synth_Ic"/>
</dbReference>
<dbReference type="InterPro" id="IPR014729">
    <property type="entry name" value="Rossmann-like_a/b/a_fold"/>
</dbReference>
<dbReference type="InterPro" id="IPR002942">
    <property type="entry name" value="S4_RNA-bd"/>
</dbReference>
<dbReference type="InterPro" id="IPR036986">
    <property type="entry name" value="S4_RNA-bd_sf"/>
</dbReference>
<dbReference type="InterPro" id="IPR054608">
    <property type="entry name" value="SYY-like_C"/>
</dbReference>
<dbReference type="InterPro" id="IPR002307">
    <property type="entry name" value="Tyr-tRNA-ligase"/>
</dbReference>
<dbReference type="InterPro" id="IPR024088">
    <property type="entry name" value="Tyr-tRNA-ligase_bac-type"/>
</dbReference>
<dbReference type="InterPro" id="IPR024107">
    <property type="entry name" value="Tyr-tRNA-ligase_bac_1"/>
</dbReference>
<dbReference type="NCBIfam" id="TIGR00234">
    <property type="entry name" value="tyrS"/>
    <property type="match status" value="1"/>
</dbReference>
<dbReference type="PANTHER" id="PTHR11766:SF0">
    <property type="entry name" value="TYROSINE--TRNA LIGASE, MITOCHONDRIAL"/>
    <property type="match status" value="1"/>
</dbReference>
<dbReference type="PANTHER" id="PTHR11766">
    <property type="entry name" value="TYROSYL-TRNA SYNTHETASE"/>
    <property type="match status" value="1"/>
</dbReference>
<dbReference type="Pfam" id="PF22421">
    <property type="entry name" value="SYY_C-terminal"/>
    <property type="match status" value="1"/>
</dbReference>
<dbReference type="Pfam" id="PF00579">
    <property type="entry name" value="tRNA-synt_1b"/>
    <property type="match status" value="1"/>
</dbReference>
<dbReference type="PRINTS" id="PR01040">
    <property type="entry name" value="TRNASYNTHTYR"/>
</dbReference>
<dbReference type="SMART" id="SM00363">
    <property type="entry name" value="S4"/>
    <property type="match status" value="1"/>
</dbReference>
<dbReference type="SUPFAM" id="SSF55174">
    <property type="entry name" value="Alpha-L RNA-binding motif"/>
    <property type="match status" value="1"/>
</dbReference>
<dbReference type="SUPFAM" id="SSF52374">
    <property type="entry name" value="Nucleotidylyl transferase"/>
    <property type="match status" value="1"/>
</dbReference>
<dbReference type="PROSITE" id="PS00178">
    <property type="entry name" value="AA_TRNA_LIGASE_I"/>
    <property type="match status" value="1"/>
</dbReference>
<dbReference type="PROSITE" id="PS50889">
    <property type="entry name" value="S4"/>
    <property type="match status" value="1"/>
</dbReference>
<name>SYY_STRPD</name>
<organism>
    <name type="scientific">Streptococcus pyogenes serotype M2 (strain MGAS10270)</name>
    <dbReference type="NCBI Taxonomy" id="370552"/>
    <lineage>
        <taxon>Bacteria</taxon>
        <taxon>Bacillati</taxon>
        <taxon>Bacillota</taxon>
        <taxon>Bacilli</taxon>
        <taxon>Lactobacillales</taxon>
        <taxon>Streptococcaceae</taxon>
        <taxon>Streptococcus</taxon>
    </lineage>
</organism>
<proteinExistence type="inferred from homology"/>
<comment type="function">
    <text evidence="1">Catalyzes the attachment of tyrosine to tRNA(Tyr) in a two-step reaction: tyrosine is first activated by ATP to form Tyr-AMP and then transferred to the acceptor end of tRNA(Tyr).</text>
</comment>
<comment type="catalytic activity">
    <reaction evidence="1">
        <text>tRNA(Tyr) + L-tyrosine + ATP = L-tyrosyl-tRNA(Tyr) + AMP + diphosphate + H(+)</text>
        <dbReference type="Rhea" id="RHEA:10220"/>
        <dbReference type="Rhea" id="RHEA-COMP:9706"/>
        <dbReference type="Rhea" id="RHEA-COMP:9707"/>
        <dbReference type="ChEBI" id="CHEBI:15378"/>
        <dbReference type="ChEBI" id="CHEBI:30616"/>
        <dbReference type="ChEBI" id="CHEBI:33019"/>
        <dbReference type="ChEBI" id="CHEBI:58315"/>
        <dbReference type="ChEBI" id="CHEBI:78442"/>
        <dbReference type="ChEBI" id="CHEBI:78536"/>
        <dbReference type="ChEBI" id="CHEBI:456215"/>
        <dbReference type="EC" id="6.1.1.1"/>
    </reaction>
</comment>
<comment type="subunit">
    <text evidence="1">Homodimer.</text>
</comment>
<comment type="subcellular location">
    <subcellularLocation>
        <location evidence="1">Cytoplasm</location>
    </subcellularLocation>
</comment>
<comment type="similarity">
    <text evidence="1">Belongs to the class-I aminoacyl-tRNA synthetase family. TyrS type 1 subfamily.</text>
</comment>
<evidence type="ECO:0000255" key="1">
    <source>
        <dbReference type="HAMAP-Rule" id="MF_02006"/>
    </source>
</evidence>
<sequence>MNIFEELKARGLVFQTTDEQALVKALTEGQVSYYTGYDPTADSLHLGHLVAILTSRRLQLAGHKPYALVGGATGLIGDPSFKDAERSLQTKETVLEWSDKIKGQLSTFLDFENGDNKAELVNNYDWFSQISFIDFLRDVGKYFTVNYMMSKDSVKKRIETGISYTEFAYQIMQGYDFYELNDKHNVTLQIGGSDQWGNMTAGTELLRKKADKTGHVMTVPLITDSTGKKFGKSEGNAVWLDADKTSPYEMYQFWLNVMDDDAVRFLKIFTFLSLDEIAEIETQFNAARHERLAQKTLAREVVTLVHGEEAYKQALNITEQLFAGNIKNLSANELKQGLSNVPNYHVQSEDSLNLVDMLVTAGISPSKRQAREDVQNGAIYINGDRVQDLDYQLSNDDKIDDQLTVIRRGKKKYAVLTY</sequence>
<reference key="1">
    <citation type="journal article" date="2006" name="Proc. Natl. Acad. Sci. U.S.A.">
        <title>Molecular genetic anatomy of inter- and intraserotype variation in the human bacterial pathogen group A Streptococcus.</title>
        <authorList>
            <person name="Beres S.B."/>
            <person name="Richter E.W."/>
            <person name="Nagiec M.J."/>
            <person name="Sumby P."/>
            <person name="Porcella S.F."/>
            <person name="DeLeo F.R."/>
            <person name="Musser J.M."/>
        </authorList>
    </citation>
    <scope>NUCLEOTIDE SEQUENCE [LARGE SCALE GENOMIC DNA]</scope>
    <source>
        <strain>MGAS10270</strain>
    </source>
</reference>
<keyword id="KW-0030">Aminoacyl-tRNA synthetase</keyword>
<keyword id="KW-0067">ATP-binding</keyword>
<keyword id="KW-0963">Cytoplasm</keyword>
<keyword id="KW-0436">Ligase</keyword>
<keyword id="KW-0547">Nucleotide-binding</keyword>
<keyword id="KW-0648">Protein biosynthesis</keyword>
<keyword id="KW-0694">RNA-binding</keyword>